<proteinExistence type="evidence at transcript level"/>
<name>TERT_RAT</name>
<feature type="chain" id="PRO_0000245165" description="Telomerase reverse transcriptase">
    <location>
        <begin position="1"/>
        <end position="1125"/>
    </location>
</feature>
<feature type="domain" description="Reverse transcriptase" evidence="6">
    <location>
        <begin position="595"/>
        <end position="928"/>
    </location>
</feature>
<feature type="region of interest" description="RNA-interacting domain 1" evidence="1">
    <location>
        <begin position="1"/>
        <end position="239"/>
    </location>
</feature>
<feature type="region of interest" description="GQ motif" evidence="1">
    <location>
        <begin position="58"/>
        <end position="205"/>
    </location>
</feature>
<feature type="region of interest" description="Required for regulating specificity for telomeric DNA and for processivity for primer elongation" evidence="1">
    <location>
        <begin position="137"/>
        <end position="141"/>
    </location>
</feature>
<feature type="region of interest" description="Disordered" evidence="7">
    <location>
        <begin position="206"/>
        <end position="304"/>
    </location>
</feature>
<feature type="region of interest" description="Linker" evidence="1">
    <location>
        <begin position="240"/>
        <end position="328"/>
    </location>
</feature>
<feature type="region of interest" description="Required for oligomerization" evidence="1">
    <location>
        <begin position="306"/>
        <end position="528"/>
    </location>
</feature>
<feature type="region of interest" description="RNA-interacting domain 2" evidence="1">
    <location>
        <begin position="329"/>
        <end position="540"/>
    </location>
</feature>
<feature type="region of interest" description="QFP motif" evidence="1">
    <location>
        <begin position="381"/>
        <end position="511"/>
    </location>
</feature>
<feature type="region of interest" description="CP motif" evidence="1">
    <location>
        <begin position="402"/>
        <end position="422"/>
    </location>
</feature>
<feature type="region of interest" description="Required for oligomerization" evidence="1">
    <location>
        <begin position="907"/>
        <end position="921"/>
    </location>
</feature>
<feature type="region of interest" description="Primer grip sequence" evidence="1">
    <location>
        <begin position="923"/>
        <end position="927"/>
    </location>
</feature>
<feature type="region of interest" description="CTE" evidence="1">
    <location>
        <begin position="929"/>
        <end position="1125"/>
    </location>
</feature>
<feature type="short sequence motif" description="TFLY; involved in RNA binding" evidence="4">
    <location>
        <begin position="332"/>
        <end position="337"/>
    </location>
</feature>
<feature type="compositionally biased region" description="Polar residues" evidence="7">
    <location>
        <begin position="206"/>
        <end position="216"/>
    </location>
</feature>
<feature type="compositionally biased region" description="Basic and acidic residues" evidence="7">
    <location>
        <begin position="247"/>
        <end position="259"/>
    </location>
</feature>
<feature type="compositionally biased region" description="Low complexity" evidence="7">
    <location>
        <begin position="273"/>
        <end position="287"/>
    </location>
</feature>
<feature type="binding site" evidence="6">
    <location>
        <position position="702"/>
    </location>
    <ligand>
        <name>Mg(2+)</name>
        <dbReference type="ChEBI" id="CHEBI:18420"/>
        <note>catalytic</note>
    </ligand>
</feature>
<feature type="binding site" evidence="6">
    <location>
        <position position="861"/>
    </location>
    <ligand>
        <name>Mg(2+)</name>
        <dbReference type="ChEBI" id="CHEBI:18420"/>
        <note>catalytic</note>
    </ligand>
</feature>
<feature type="binding site" evidence="6">
    <location>
        <position position="862"/>
    </location>
    <ligand>
        <name>Mg(2+)</name>
        <dbReference type="ChEBI" id="CHEBI:18420"/>
        <note>catalytic</note>
    </ligand>
</feature>
<feature type="site" description="Required for optimal binding of telomeric ssDNA and incorporation of nucleotides at the second position of the template" evidence="1">
    <location>
        <position position="169"/>
    </location>
</feature>
<feature type="site" description="Required for nucleotide incorporation and primer extension rate" evidence="1">
    <location>
        <position position="860"/>
    </location>
</feature>
<feature type="modified residue" description="Phosphoserine; by DYRK2" evidence="2">
    <location>
        <position position="447"/>
    </location>
</feature>
<feature type="modified residue" description="Phosphotyrosine; by SRC-type Tyr-kinases" evidence="2">
    <location>
        <position position="697"/>
    </location>
</feature>
<feature type="splice variant" id="VSP_052081" description="In isoform 3." evidence="12">
    <original>EKDTVPAAEHRLRERILAMFLFWLMDTYVVQLLRSFFYITETTFQKNRLFFYRKSVWSKLQSIGIRQQLERVQLRELSQEEVKHHQDTWLAMPICRLRFIP</original>
    <variation>ACTSFWDSPSPSQVSFIFITAGKPSFPWIRRPLRYLETHRVELTHPAWQEGHCPCRRAPSEGEDPCHVPVLANGHICGTAAEVILLHHRDHVPEEPPFLLP</variation>
    <location>
        <begin position="515"/>
        <end position="615"/>
    </location>
</feature>
<feature type="splice variant" id="VSP_052082" description="In isoform 3." evidence="12">
    <location>
        <begin position="616"/>
        <end position="1125"/>
    </location>
</feature>
<feature type="splice variant" id="VSP_052083" description="In isoform 2." evidence="12">
    <location>
        <begin position="641"/>
        <end position="646"/>
    </location>
</feature>
<feature type="sequence conflict" description="In Ref. 2; DAA01427." evidence="13" ref="2">
    <original>A</original>
    <variation>V</variation>
    <location>
        <position position="521"/>
    </location>
</feature>
<feature type="sequence conflict" description="In Ref. 2; DAA01427." evidence="13" ref="2">
    <original>E</original>
    <variation>V</variation>
    <location>
        <position position="528"/>
    </location>
</feature>
<feature type="sequence conflict" description="In Ref. 2; DAA01427." evidence="13" ref="2">
    <original>FF</original>
    <variation>LL</variation>
    <location>
        <begin position="550"/>
        <end position="551"/>
    </location>
</feature>
<feature type="sequence conflict" description="In Ref. 2; DAA01427." evidence="13" ref="2">
    <original>L</original>
    <variation>P</variation>
    <location>
        <position position="583"/>
    </location>
</feature>
<feature type="sequence conflict" description="In Ref. 2; DAA01427." evidence="13" ref="2">
    <original>M</original>
    <variation>L</variation>
    <location>
        <position position="630"/>
    </location>
</feature>
<reference evidence="13 14" key="1">
    <citation type="journal article" date="2006" name="Protein Pept. Lett.">
        <title>Predominant expression of rTERTb, an inactive TERT variant, in the adult rat brain.</title>
        <authorList>
            <person name="Kaneko R."/>
            <person name="Esumi S."/>
            <person name="Yagi T."/>
            <person name="Hirabayashi T."/>
        </authorList>
    </citation>
    <scope>NUCLEOTIDE SEQUENCE [MRNA] (ISOFORMS 1; 2 AND 3)</scope>
    <scope>TISSUE SPECIFICITY</scope>
    <scope>DEVELOPMENTAL STAGE</scope>
    <source>
        <strain evidence="14">Brown Norway</strain>
    </source>
</reference>
<reference evidence="13" key="2">
    <citation type="journal article" date="2004" name="Nature">
        <title>Genome sequence of the Brown Norway rat yields insights into mammalian evolution.</title>
        <authorList>
            <person name="Gibbs R.A."/>
            <person name="Weinstock G.M."/>
            <person name="Metzker M.L."/>
            <person name="Muzny D.M."/>
            <person name="Sodergren E.J."/>
            <person name="Scherer S."/>
            <person name="Scott G."/>
            <person name="Steffen D."/>
            <person name="Worley K.C."/>
            <person name="Burch P.E."/>
            <person name="Okwuonu G."/>
            <person name="Hines S."/>
            <person name="Lewis L."/>
            <person name="Deramo C."/>
            <person name="Delgado O."/>
            <person name="Dugan-Rocha S."/>
            <person name="Miner G."/>
            <person name="Morgan M."/>
            <person name="Hawes A."/>
            <person name="Gill R."/>
            <person name="Holt R.A."/>
            <person name="Adams M.D."/>
            <person name="Amanatides P.G."/>
            <person name="Baden-Tillson H."/>
            <person name="Barnstead M."/>
            <person name="Chin S."/>
            <person name="Evans C.A."/>
            <person name="Ferriera S."/>
            <person name="Fosler C."/>
            <person name="Glodek A."/>
            <person name="Gu Z."/>
            <person name="Jennings D."/>
            <person name="Kraft C.L."/>
            <person name="Nguyen T."/>
            <person name="Pfannkoch C.M."/>
            <person name="Sitter C."/>
            <person name="Sutton G.G."/>
            <person name="Venter J.C."/>
            <person name="Woodage T."/>
            <person name="Smith D."/>
            <person name="Lee H.-M."/>
            <person name="Gustafson E."/>
            <person name="Cahill P."/>
            <person name="Kana A."/>
            <person name="Doucette-Stamm L."/>
            <person name="Weinstock K."/>
            <person name="Fechtel K."/>
            <person name="Weiss R.B."/>
            <person name="Dunn D.M."/>
            <person name="Green E.D."/>
            <person name="Blakesley R.W."/>
            <person name="Bouffard G.G."/>
            <person name="De Jong P.J."/>
            <person name="Osoegawa K."/>
            <person name="Zhu B."/>
            <person name="Marra M."/>
            <person name="Schein J."/>
            <person name="Bosdet I."/>
            <person name="Fjell C."/>
            <person name="Jones S."/>
            <person name="Krzywinski M."/>
            <person name="Mathewson C."/>
            <person name="Siddiqui A."/>
            <person name="Wye N."/>
            <person name="McPherson J."/>
            <person name="Zhao S."/>
            <person name="Fraser C.M."/>
            <person name="Shetty J."/>
            <person name="Shatsman S."/>
            <person name="Geer K."/>
            <person name="Chen Y."/>
            <person name="Abramzon S."/>
            <person name="Nierman W.C."/>
            <person name="Havlak P.H."/>
            <person name="Chen R."/>
            <person name="Durbin K.J."/>
            <person name="Egan A."/>
            <person name="Ren Y."/>
            <person name="Song X.-Z."/>
            <person name="Li B."/>
            <person name="Liu Y."/>
            <person name="Qin X."/>
            <person name="Cawley S."/>
            <person name="Cooney A.J."/>
            <person name="D'Souza L.M."/>
            <person name="Martin K."/>
            <person name="Wu J.Q."/>
            <person name="Gonzalez-Garay M.L."/>
            <person name="Jackson A.R."/>
            <person name="Kalafus K.J."/>
            <person name="McLeod M.P."/>
            <person name="Milosavljevic A."/>
            <person name="Virk D."/>
            <person name="Volkov A."/>
            <person name="Wheeler D.A."/>
            <person name="Zhang Z."/>
            <person name="Bailey J.A."/>
            <person name="Eichler E.E."/>
            <person name="Tuzun E."/>
            <person name="Birney E."/>
            <person name="Mongin E."/>
            <person name="Ureta-Vidal A."/>
            <person name="Woodwark C."/>
            <person name="Zdobnov E."/>
            <person name="Bork P."/>
            <person name="Suyama M."/>
            <person name="Torrents D."/>
            <person name="Alexandersson M."/>
            <person name="Trask B.J."/>
            <person name="Young J.M."/>
            <person name="Huang H."/>
            <person name="Wang H."/>
            <person name="Xing H."/>
            <person name="Daniels S."/>
            <person name="Gietzen D."/>
            <person name="Schmidt J."/>
            <person name="Stevens K."/>
            <person name="Vitt U."/>
            <person name="Wingrove J."/>
            <person name="Camara F."/>
            <person name="Mar Alba M."/>
            <person name="Abril J.F."/>
            <person name="Guigo R."/>
            <person name="Smit A."/>
            <person name="Dubchak I."/>
            <person name="Rubin E.M."/>
            <person name="Couronne O."/>
            <person name="Poliakov A."/>
            <person name="Huebner N."/>
            <person name="Ganten D."/>
            <person name="Goesele C."/>
            <person name="Hummel O."/>
            <person name="Kreitler T."/>
            <person name="Lee Y.-A."/>
            <person name="Monti J."/>
            <person name="Schulz H."/>
            <person name="Zimdahl H."/>
            <person name="Himmelbauer H."/>
            <person name="Lehrach H."/>
            <person name="Jacob H.J."/>
            <person name="Bromberg S."/>
            <person name="Gullings-Handley J."/>
            <person name="Jensen-Seaman M.I."/>
            <person name="Kwitek A.E."/>
            <person name="Lazar J."/>
            <person name="Pasko D."/>
            <person name="Tonellato P.J."/>
            <person name="Twigger S."/>
            <person name="Ponting C.P."/>
            <person name="Duarte J.M."/>
            <person name="Rice S."/>
            <person name="Goodstadt L."/>
            <person name="Beatson S.A."/>
            <person name="Emes R.D."/>
            <person name="Winter E.E."/>
            <person name="Webber C."/>
            <person name="Brandt P."/>
            <person name="Nyakatura G."/>
            <person name="Adetobi M."/>
            <person name="Chiaromonte F."/>
            <person name="Elnitski L."/>
            <person name="Eswara P."/>
            <person name="Hardison R.C."/>
            <person name="Hou M."/>
            <person name="Kolbe D."/>
            <person name="Makova K."/>
            <person name="Miller W."/>
            <person name="Nekrutenko A."/>
            <person name="Riemer C."/>
            <person name="Schwartz S."/>
            <person name="Taylor J."/>
            <person name="Yang S."/>
            <person name="Zhang Y."/>
            <person name="Lindpaintner K."/>
            <person name="Andrews T.D."/>
            <person name="Caccamo M."/>
            <person name="Clamp M."/>
            <person name="Clarke L."/>
            <person name="Curwen V."/>
            <person name="Durbin R.M."/>
            <person name="Eyras E."/>
            <person name="Searle S.M."/>
            <person name="Cooper G.M."/>
            <person name="Batzoglou S."/>
            <person name="Brudno M."/>
            <person name="Sidow A."/>
            <person name="Stone E.A."/>
            <person name="Payseur B.A."/>
            <person name="Bourque G."/>
            <person name="Lopez-Otin C."/>
            <person name="Puente X.S."/>
            <person name="Chakrabarti K."/>
            <person name="Chatterji S."/>
            <person name="Dewey C."/>
            <person name="Pachter L."/>
            <person name="Bray N."/>
            <person name="Yap V.B."/>
            <person name="Caspi A."/>
            <person name="Tesler G."/>
            <person name="Pevzner P.A."/>
            <person name="Haussler D."/>
            <person name="Roskin K.M."/>
            <person name="Baertsch R."/>
            <person name="Clawson H."/>
            <person name="Furey T.S."/>
            <person name="Hinrichs A.S."/>
            <person name="Karolchik D."/>
            <person name="Kent W.J."/>
            <person name="Rosenbloom K.R."/>
            <person name="Trumbower H."/>
            <person name="Weirauch M."/>
            <person name="Cooper D.N."/>
            <person name="Stenson P.D."/>
            <person name="Ma B."/>
            <person name="Brent M."/>
            <person name="Arumugam M."/>
            <person name="Shteynberg D."/>
            <person name="Copley R.R."/>
            <person name="Taylor M.S."/>
            <person name="Riethman H."/>
            <person name="Mudunuri U."/>
            <person name="Peterson J."/>
            <person name="Guyer M."/>
            <person name="Felsenfeld A."/>
            <person name="Old S."/>
            <person name="Mockrin S."/>
            <person name="Collins F.S."/>
        </authorList>
    </citation>
    <scope>NUCLEOTIDE SEQUENCE [LARGE SCALE GENOMIC DNA]</scope>
    <source>
        <strain evidence="9">Brown Norway</strain>
    </source>
</reference>
<reference evidence="13 15" key="3">
    <citation type="journal article" date="2006" name="Oncogene">
        <title>Role of Smad3 in the regulation of rat telomerase reverse transcriptase by TGFbeta.</title>
        <authorList>
            <person name="Hu B."/>
            <person name="Tack D.C."/>
            <person name="Liu T."/>
            <person name="Wu Z."/>
            <person name="Ullenbruch M.R."/>
            <person name="Phan S.H."/>
        </authorList>
    </citation>
    <scope>NUCLEOTIDE SEQUENCE [GENOMIC DNA] OF 1-58</scope>
    <scope>INDUCTION</scope>
</reference>
<reference evidence="13 16" key="4">
    <citation type="journal article" date="2003" name="Anal. Biochem.">
        <title>Detection and quantification of transcripts for the catalytic subunit TERT and the RNA component of telomerase in rat tissue.</title>
        <authorList>
            <person name="Holzmann K."/>
            <person name="Berger W."/>
            <person name="Mejri D."/>
            <person name="Cerni C."/>
            <person name="Sasgary S."/>
        </authorList>
    </citation>
    <scope>NUCLEOTIDE SEQUENCE [GENOMIC DNA / MRNA] OF 46-161</scope>
    <scope>TISSUE SPECIFICITY</scope>
    <source>
        <strain evidence="16">Fischer</strain>
    </source>
</reference>
<reference evidence="13 17" key="5">
    <citation type="journal article" date="2005" name="Chonnam Med. J.">
        <title>The identification and characterization of rat telomerase catalytic subunit rTERT mRNA from rat genomic sequence.</title>
        <authorList>
            <person name="Kim M.H."/>
            <person name="Choi C."/>
        </authorList>
    </citation>
    <scope>IDENTIFICATION</scope>
    <source>
        <strain>Brown Norway</strain>
    </source>
</reference>
<keyword id="KW-0025">Alternative splicing</keyword>
<keyword id="KW-0158">Chromosome</keyword>
<keyword id="KW-0963">Cytoplasm</keyword>
<keyword id="KW-0238">DNA-binding</keyword>
<keyword id="KW-0460">Magnesium</keyword>
<keyword id="KW-0479">Metal-binding</keyword>
<keyword id="KW-0548">Nucleotidyltransferase</keyword>
<keyword id="KW-0539">Nucleus</keyword>
<keyword id="KW-0597">Phosphoprotein</keyword>
<keyword id="KW-1185">Reference proteome</keyword>
<keyword id="KW-0687">Ribonucleoprotein</keyword>
<keyword id="KW-0695">RNA-directed DNA polymerase</keyword>
<keyword id="KW-0779">Telomere</keyword>
<keyword id="KW-0808">Transferase</keyword>
<keyword id="KW-0832">Ubl conjugation</keyword>
<sequence>MPRAPRCPAVRSLLRSRYREVWPLATFVRRLGLEGSRLVQPGDPKVFRTLVAQCLVCVPWGSQPPPADLSFHQVSSLKELVSRVVQKLCERGERNVLAFGFALLNGARGGPPMAFTTSVHSYLPNSVTESLCVSGAWMLLLSRVGDDLLVYLLSHCALYLLVPPSCAYQVCGSPLYQICATTDTWSSVPAGYRPTRPVGGNFTNLGSAHQIKNSGHQEAPKPQALPSRGTKRLLSLTSTNVPSAKKARFEPALRVDKGPHRQVVPTPSGKTWAPSPAASPKVPPAAKNLSLKGKASDPSLSGSVCCKHKPSSSSLLSSPPQDAEKLRPFTETRHFLYSRGGGQEELNPSFLLNSLPPSLTGARRLVEIIFLGSRPRTSGPFCRTRRLPRRYWQMRPLFQQLLMNHAKCQYVRFLRSHCRFRTANQRVPDAMDTSPSHLTSLLRLHSSPWQVYGFLRACLRELVPAGLWGTRHNERRFLKNVKKFISLGKYAKLSLQELMWRVKVEDCHWLRSSPEKDTVPAAEHRLRERILAMFLFWLMDTYVVQLLRSFFYITETTFQKNRLFFYRKSVWSKLQSIGIRQQLERVQLRELSQEEVKHHQDTWLAMPICRLRFIPKLNGLRPIVNMSYGMDTRAFGKKKQTQCFTQSLKTLFSVLNYERTKHPNLMGASVLGTSDSYRIWRTFVLRVRALDQTPRMYFVKADVTGAYDAIPQDKLVEIVANIIRRSESMYCIRQYAVVQKDSQGQVHKSFRRQVSTLSDLQPYMGQFTKHLQDSDASALRNSVVIEQSISMNETGSSLLHFFLRFVRHSVVKIDGRFYVQCQGIPQGSSLSTLLCSLCFGDMENKLFAEVQQDGLLLRFVDDFLLVTPHLAHAKAFLSTLVHGVPEYGCMINLQKTVVNFPVETGALGGAAPHQLPAHCLFPWCGLLLDTRTLEVFCDYSGYGRTSIKMSLTFQGVSRAGKTMRYKLLSVLRLKCHGLFLDLQVNSLQTVCINIYKIFLLQAYRFHACVIRLPFGQHVRKNHAFFLGIISNLASCCYAILKVKNPGVSLRAKGAPGSFPPEATRWLCYQAFLLKLAAHSVTYKCLLGPLRTAQKQLCRKLPEATMTLLKTAADPALSTDFQTILD</sequence>
<accession>Q673L6</accession>
<accession>Q1LZ57</accession>
<accession>Q4U0V7</accession>
<accession>Q673L3</accession>
<accession>Q673L5</accession>
<accession>Q80SU5</accession>
<protein>
    <recommendedName>
        <fullName>Telomerase reverse transcriptase</fullName>
        <ecNumber>2.7.7.49</ecNumber>
    </recommendedName>
    <alternativeName>
        <fullName>Telomerase catalytic subunit</fullName>
    </alternativeName>
</protein>
<organism>
    <name type="scientific">Rattus norvegicus</name>
    <name type="common">Rat</name>
    <dbReference type="NCBI Taxonomy" id="10116"/>
    <lineage>
        <taxon>Eukaryota</taxon>
        <taxon>Metazoa</taxon>
        <taxon>Chordata</taxon>
        <taxon>Craniata</taxon>
        <taxon>Vertebrata</taxon>
        <taxon>Euteleostomi</taxon>
        <taxon>Mammalia</taxon>
        <taxon>Eutheria</taxon>
        <taxon>Euarchontoglires</taxon>
        <taxon>Glires</taxon>
        <taxon>Rodentia</taxon>
        <taxon>Myomorpha</taxon>
        <taxon>Muroidea</taxon>
        <taxon>Muridae</taxon>
        <taxon>Murinae</taxon>
        <taxon>Rattus</taxon>
    </lineage>
</organism>
<gene>
    <name evidence="18" type="primary">Tert</name>
</gene>
<dbReference type="EC" id="2.7.7.49"/>
<dbReference type="EMBL" id="AY539717">
    <property type="protein sequence ID" value="AAT09124.1"/>
    <property type="molecule type" value="mRNA"/>
</dbReference>
<dbReference type="EMBL" id="AY539718">
    <property type="protein sequence ID" value="AAT09125.1"/>
    <property type="molecule type" value="mRNA"/>
</dbReference>
<dbReference type="EMBL" id="AY539719">
    <property type="protein sequence ID" value="AAT09126.1"/>
    <property type="molecule type" value="mRNA"/>
</dbReference>
<dbReference type="EMBL" id="AY539720">
    <property type="protein sequence ID" value="AAT09127.1"/>
    <property type="molecule type" value="mRNA"/>
</dbReference>
<dbReference type="EMBL" id="AC123569">
    <property type="status" value="NOT_ANNOTATED_CDS"/>
    <property type="molecule type" value="Genomic_DNA"/>
</dbReference>
<dbReference type="EMBL" id="DQ021473">
    <property type="protein sequence ID" value="AAY40300.1"/>
    <property type="molecule type" value="Genomic_DNA"/>
</dbReference>
<dbReference type="EMBL" id="AJ440965">
    <property type="protein sequence ID" value="CAD29524.1"/>
    <property type="molecule type" value="mRNA"/>
</dbReference>
<dbReference type="EMBL" id="AJ440966">
    <property type="protein sequence ID" value="CAD29525.2"/>
    <property type="molecule type" value="Genomic_DNA"/>
</dbReference>
<dbReference type="EMBL" id="BK000660">
    <property type="protein sequence ID" value="DAA01427.1"/>
    <property type="molecule type" value="mRNA"/>
</dbReference>
<dbReference type="RefSeq" id="NP_445875.1">
    <molecule id="Q673L6-1"/>
    <property type="nucleotide sequence ID" value="NM_053423.2"/>
</dbReference>
<dbReference type="RefSeq" id="XP_063144068.1">
    <molecule id="Q673L6-2"/>
    <property type="nucleotide sequence ID" value="XM_063287998.1"/>
</dbReference>
<dbReference type="SMR" id="Q673L6"/>
<dbReference type="FunCoup" id="Q673L6">
    <property type="interactions" value="89"/>
</dbReference>
<dbReference type="STRING" id="10116.ENSRNOP00000022683"/>
<dbReference type="BindingDB" id="Q673L6"/>
<dbReference type="ChEMBL" id="CHEMBL3108654"/>
<dbReference type="GlyGen" id="Q673L6">
    <property type="glycosylation" value="1 site"/>
</dbReference>
<dbReference type="PhosphoSitePlus" id="Q673L6"/>
<dbReference type="PaxDb" id="10116-ENSRNOP00000022683"/>
<dbReference type="Ensembl" id="ENSRNOT00000022683.5">
    <molecule id="Q673L6-3"/>
    <property type="protein sequence ID" value="ENSRNOP00000022683.4"/>
    <property type="gene ID" value="ENSRNOG00000025327.8"/>
</dbReference>
<dbReference type="Ensembl" id="ENSRNOT00000100559.1">
    <molecule id="Q673L6-1"/>
    <property type="protein sequence ID" value="ENSRNOP00000076971.1"/>
    <property type="gene ID" value="ENSRNOG00000025327.8"/>
</dbReference>
<dbReference type="GeneID" id="301965"/>
<dbReference type="KEGG" id="rno:301965"/>
<dbReference type="UCSC" id="RGD:70494">
    <molecule id="Q673L6-1"/>
    <property type="organism name" value="rat"/>
</dbReference>
<dbReference type="AGR" id="RGD:70494"/>
<dbReference type="CTD" id="7015"/>
<dbReference type="RGD" id="70494">
    <property type="gene designation" value="Tert"/>
</dbReference>
<dbReference type="eggNOG" id="KOG1005">
    <property type="taxonomic scope" value="Eukaryota"/>
</dbReference>
<dbReference type="GeneTree" id="ENSGT00390000018531"/>
<dbReference type="HOGENOM" id="CLU_001996_2_0_1"/>
<dbReference type="InParanoid" id="Q673L6"/>
<dbReference type="OMA" id="SYKAVQW"/>
<dbReference type="OrthoDB" id="289721at2759"/>
<dbReference type="PhylomeDB" id="Q673L6"/>
<dbReference type="TreeFam" id="TF329048"/>
<dbReference type="Reactome" id="R-RNO-171319">
    <property type="pathway name" value="Telomere Extension By Telomerase"/>
</dbReference>
<dbReference type="Reactome" id="R-RNO-201722">
    <property type="pathway name" value="Formation of the beta-catenin:TCF transactivating complex"/>
</dbReference>
<dbReference type="PRO" id="PR:Q673L6"/>
<dbReference type="Proteomes" id="UP000002494">
    <property type="component" value="Chromosome 1"/>
</dbReference>
<dbReference type="Bgee" id="ENSRNOG00000025327">
    <property type="expression patterns" value="Expressed in liver and 15 other cell types or tissues"/>
</dbReference>
<dbReference type="GO" id="GO:0000781">
    <property type="term" value="C:chromosome, telomeric region"/>
    <property type="evidence" value="ECO:0000266"/>
    <property type="project" value="RGD"/>
</dbReference>
<dbReference type="GO" id="GO:0005737">
    <property type="term" value="C:cytoplasm"/>
    <property type="evidence" value="ECO:0000266"/>
    <property type="project" value="RGD"/>
</dbReference>
<dbReference type="GO" id="GO:0005829">
    <property type="term" value="C:cytosol"/>
    <property type="evidence" value="ECO:0007669"/>
    <property type="project" value="Ensembl"/>
</dbReference>
<dbReference type="GO" id="GO:0042645">
    <property type="term" value="C:mitochondrial nucleoid"/>
    <property type="evidence" value="ECO:0000266"/>
    <property type="project" value="RGD"/>
</dbReference>
<dbReference type="GO" id="GO:0005739">
    <property type="term" value="C:mitochondrion"/>
    <property type="evidence" value="ECO:0000314"/>
    <property type="project" value="BHF-UCL"/>
</dbReference>
<dbReference type="GO" id="GO:0016607">
    <property type="term" value="C:nuclear speck"/>
    <property type="evidence" value="ECO:0007669"/>
    <property type="project" value="Ensembl"/>
</dbReference>
<dbReference type="GO" id="GO:0005730">
    <property type="term" value="C:nucleolus"/>
    <property type="evidence" value="ECO:0000250"/>
    <property type="project" value="UniProtKB"/>
</dbReference>
<dbReference type="GO" id="GO:0005654">
    <property type="term" value="C:nucleoplasm"/>
    <property type="evidence" value="ECO:0000266"/>
    <property type="project" value="RGD"/>
</dbReference>
<dbReference type="GO" id="GO:0005634">
    <property type="term" value="C:nucleus"/>
    <property type="evidence" value="ECO:0000266"/>
    <property type="project" value="RGD"/>
</dbReference>
<dbReference type="GO" id="GO:0005886">
    <property type="term" value="C:plasma membrane"/>
    <property type="evidence" value="ECO:0000266"/>
    <property type="project" value="RGD"/>
</dbReference>
<dbReference type="GO" id="GO:0016605">
    <property type="term" value="C:PML body"/>
    <property type="evidence" value="ECO:0000266"/>
    <property type="project" value="RGD"/>
</dbReference>
<dbReference type="GO" id="GO:0031379">
    <property type="term" value="C:RNA-directed RNA polymerase complex"/>
    <property type="evidence" value="ECO:0000266"/>
    <property type="project" value="RGD"/>
</dbReference>
<dbReference type="GO" id="GO:0000333">
    <property type="term" value="C:telomerase catalytic core complex"/>
    <property type="evidence" value="ECO:0000266"/>
    <property type="project" value="RGD"/>
</dbReference>
<dbReference type="GO" id="GO:0005697">
    <property type="term" value="C:telomerase holoenzyme complex"/>
    <property type="evidence" value="ECO:0000250"/>
    <property type="project" value="UniProtKB"/>
</dbReference>
<dbReference type="GO" id="GO:1990572">
    <property type="term" value="C:TERT-RMRP complex"/>
    <property type="evidence" value="ECO:0000266"/>
    <property type="project" value="RGD"/>
</dbReference>
<dbReference type="GO" id="GO:0003677">
    <property type="term" value="F:DNA binding"/>
    <property type="evidence" value="ECO:0000266"/>
    <property type="project" value="RGD"/>
</dbReference>
<dbReference type="GO" id="GO:0042802">
    <property type="term" value="F:identical protein binding"/>
    <property type="evidence" value="ECO:0000266"/>
    <property type="project" value="RGD"/>
</dbReference>
<dbReference type="GO" id="GO:0046872">
    <property type="term" value="F:metal ion binding"/>
    <property type="evidence" value="ECO:0007669"/>
    <property type="project" value="UniProtKB-KW"/>
</dbReference>
<dbReference type="GO" id="GO:0042803">
    <property type="term" value="F:protein homodimerization activity"/>
    <property type="evidence" value="ECO:0000266"/>
    <property type="project" value="RGD"/>
</dbReference>
<dbReference type="GO" id="GO:0051087">
    <property type="term" value="F:protein-folding chaperone binding"/>
    <property type="evidence" value="ECO:0000266"/>
    <property type="project" value="RGD"/>
</dbReference>
<dbReference type="GO" id="GO:0003723">
    <property type="term" value="F:RNA binding"/>
    <property type="evidence" value="ECO:0000266"/>
    <property type="project" value="RGD"/>
</dbReference>
<dbReference type="GO" id="GO:0003964">
    <property type="term" value="F:RNA-directed DNA polymerase activity"/>
    <property type="evidence" value="ECO:0000266"/>
    <property type="project" value="RGD"/>
</dbReference>
<dbReference type="GO" id="GO:0003968">
    <property type="term" value="F:RNA-directed RNA polymerase activity"/>
    <property type="evidence" value="ECO:0000266"/>
    <property type="project" value="RGD"/>
</dbReference>
<dbReference type="GO" id="GO:0003720">
    <property type="term" value="F:telomerase activity"/>
    <property type="evidence" value="ECO:0000314"/>
    <property type="project" value="RGD"/>
</dbReference>
<dbReference type="GO" id="GO:0070034">
    <property type="term" value="F:telomerase RNA binding"/>
    <property type="evidence" value="ECO:0000266"/>
    <property type="project" value="RGD"/>
</dbReference>
<dbReference type="GO" id="GO:0042162">
    <property type="term" value="F:telomeric DNA binding"/>
    <property type="evidence" value="ECO:0000318"/>
    <property type="project" value="GO_Central"/>
</dbReference>
<dbReference type="GO" id="GO:0098680">
    <property type="term" value="F:template-free RNA nucleotidyltransferase"/>
    <property type="evidence" value="ECO:0000266"/>
    <property type="project" value="RGD"/>
</dbReference>
<dbReference type="GO" id="GO:0001223">
    <property type="term" value="F:transcription coactivator binding"/>
    <property type="evidence" value="ECO:0000266"/>
    <property type="project" value="RGD"/>
</dbReference>
<dbReference type="GO" id="GO:0000049">
    <property type="term" value="F:tRNA binding"/>
    <property type="evidence" value="ECO:0000266"/>
    <property type="project" value="RGD"/>
</dbReference>
<dbReference type="GO" id="GO:0071456">
    <property type="term" value="P:cellular response to hypoxia"/>
    <property type="evidence" value="ECO:0000270"/>
    <property type="project" value="RGD"/>
</dbReference>
<dbReference type="GO" id="GO:0071897">
    <property type="term" value="P:DNA biosynthetic process"/>
    <property type="evidence" value="ECO:0000266"/>
    <property type="project" value="RGD"/>
</dbReference>
<dbReference type="GO" id="GO:0022616">
    <property type="term" value="P:DNA strand elongation"/>
    <property type="evidence" value="ECO:0000266"/>
    <property type="project" value="RGD"/>
</dbReference>
<dbReference type="GO" id="GO:0070200">
    <property type="term" value="P:establishment of protein localization to telomere"/>
    <property type="evidence" value="ECO:0000266"/>
    <property type="project" value="RGD"/>
</dbReference>
<dbReference type="GO" id="GO:0007507">
    <property type="term" value="P:heart development"/>
    <property type="evidence" value="ECO:0000270"/>
    <property type="project" value="RGD"/>
</dbReference>
<dbReference type="GO" id="GO:0007005">
    <property type="term" value="P:mitochondrion organization"/>
    <property type="evidence" value="ECO:0000266"/>
    <property type="project" value="RGD"/>
</dbReference>
<dbReference type="GO" id="GO:0043066">
    <property type="term" value="P:negative regulation of apoptotic process"/>
    <property type="evidence" value="ECO:0000315"/>
    <property type="project" value="RGD"/>
</dbReference>
<dbReference type="GO" id="GO:2000773">
    <property type="term" value="P:negative regulation of cellular senescence"/>
    <property type="evidence" value="ECO:0000266"/>
    <property type="project" value="RGD"/>
</dbReference>
<dbReference type="GO" id="GO:2000352">
    <property type="term" value="P:negative regulation of endothelial cell apoptotic process"/>
    <property type="evidence" value="ECO:0000314"/>
    <property type="project" value="RGD"/>
</dbReference>
<dbReference type="GO" id="GO:2001240">
    <property type="term" value="P:negative regulation of extrinsic apoptotic signaling pathway in absence of ligand"/>
    <property type="evidence" value="ECO:0000266"/>
    <property type="project" value="RGD"/>
</dbReference>
<dbReference type="GO" id="GO:0010629">
    <property type="term" value="P:negative regulation of gene expression"/>
    <property type="evidence" value="ECO:0000266"/>
    <property type="project" value="RGD"/>
</dbReference>
<dbReference type="GO" id="GO:0043524">
    <property type="term" value="P:negative regulation of neuron apoptotic process"/>
    <property type="evidence" value="ECO:0000315"/>
    <property type="project" value="RGD"/>
</dbReference>
<dbReference type="GO" id="GO:0045766">
    <property type="term" value="P:positive regulation of angiogenesis"/>
    <property type="evidence" value="ECO:0000314"/>
    <property type="project" value="RGD"/>
</dbReference>
<dbReference type="GO" id="GO:0046326">
    <property type="term" value="P:positive regulation of D-glucose import"/>
    <property type="evidence" value="ECO:0000266"/>
    <property type="project" value="RGD"/>
</dbReference>
<dbReference type="GO" id="GO:1900087">
    <property type="term" value="P:positive regulation of G1/S transition of mitotic cell cycle"/>
    <property type="evidence" value="ECO:0000315"/>
    <property type="project" value="RGD"/>
</dbReference>
<dbReference type="GO" id="GO:0042635">
    <property type="term" value="P:positive regulation of hair cycle"/>
    <property type="evidence" value="ECO:0000266"/>
    <property type="project" value="RGD"/>
</dbReference>
<dbReference type="GO" id="GO:1902895">
    <property type="term" value="P:positive regulation of miRNA transcription"/>
    <property type="evidence" value="ECO:0000266"/>
    <property type="project" value="RGD"/>
</dbReference>
<dbReference type="GO" id="GO:1904751">
    <property type="term" value="P:positive regulation of protein localization to nucleolus"/>
    <property type="evidence" value="ECO:0000266"/>
    <property type="project" value="RGD"/>
</dbReference>
<dbReference type="GO" id="GO:2000648">
    <property type="term" value="P:positive regulation of stem cell proliferation"/>
    <property type="evidence" value="ECO:0000266"/>
    <property type="project" value="RGD"/>
</dbReference>
<dbReference type="GO" id="GO:1903620">
    <property type="term" value="P:positive regulation of transdifferentiation"/>
    <property type="evidence" value="ECO:0000315"/>
    <property type="project" value="RGD"/>
</dbReference>
<dbReference type="GO" id="GO:1904754">
    <property type="term" value="P:positive regulation of vascular associated smooth muscle cell migration"/>
    <property type="evidence" value="ECO:0000315"/>
    <property type="project" value="RGD"/>
</dbReference>
<dbReference type="GO" id="GO:1904707">
    <property type="term" value="P:positive regulation of vascular associated smooth muscle cell proliferation"/>
    <property type="evidence" value="ECO:0000315"/>
    <property type="project" value="RGD"/>
</dbReference>
<dbReference type="GO" id="GO:0030177">
    <property type="term" value="P:positive regulation of Wnt signaling pathway"/>
    <property type="evidence" value="ECO:0000266"/>
    <property type="project" value="RGD"/>
</dbReference>
<dbReference type="GO" id="GO:0006606">
    <property type="term" value="P:protein import into nucleus"/>
    <property type="evidence" value="ECO:0000266"/>
    <property type="project" value="RGD"/>
</dbReference>
<dbReference type="GO" id="GO:0031647">
    <property type="term" value="P:regulation of protein stability"/>
    <property type="evidence" value="ECO:0000266"/>
    <property type="project" value="RGD"/>
</dbReference>
<dbReference type="GO" id="GO:0090399">
    <property type="term" value="P:replicative senescence"/>
    <property type="evidence" value="ECO:0000266"/>
    <property type="project" value="RGD"/>
</dbReference>
<dbReference type="GO" id="GO:0046686">
    <property type="term" value="P:response to cadmium ion"/>
    <property type="evidence" value="ECO:0000270"/>
    <property type="project" value="RGD"/>
</dbReference>
<dbReference type="GO" id="GO:0006278">
    <property type="term" value="P:RNA-templated DNA biosynthetic process"/>
    <property type="evidence" value="ECO:0000266"/>
    <property type="project" value="RGD"/>
</dbReference>
<dbReference type="GO" id="GO:0001172">
    <property type="term" value="P:RNA-templated transcription"/>
    <property type="evidence" value="ECO:0000266"/>
    <property type="project" value="RGD"/>
</dbReference>
<dbReference type="GO" id="GO:0030422">
    <property type="term" value="P:siRNA processing"/>
    <property type="evidence" value="ECO:0000266"/>
    <property type="project" value="RGD"/>
</dbReference>
<dbReference type="GO" id="GO:0140745">
    <property type="term" value="P:siRNA transcription"/>
    <property type="evidence" value="ECO:0000266"/>
    <property type="project" value="RGD"/>
</dbReference>
<dbReference type="GO" id="GO:0007004">
    <property type="term" value="P:telomere maintenance via telomerase"/>
    <property type="evidence" value="ECO:0000250"/>
    <property type="project" value="UniProtKB"/>
</dbReference>
<dbReference type="CDD" id="cd01648">
    <property type="entry name" value="TERT"/>
    <property type="match status" value="1"/>
</dbReference>
<dbReference type="FunFam" id="1.10.132.70:FF:000001">
    <property type="entry name" value="Telomerase reverse transcriptase"/>
    <property type="match status" value="1"/>
</dbReference>
<dbReference type="FunFam" id="1.10.357.90:FF:000001">
    <property type="entry name" value="Telomerase reverse transcriptase"/>
    <property type="match status" value="1"/>
</dbReference>
<dbReference type="FunFam" id="3.30.70.2630:FF:000001">
    <property type="entry name" value="Telomerase reverse transcriptase"/>
    <property type="match status" value="1"/>
</dbReference>
<dbReference type="Gene3D" id="1.10.132.70">
    <property type="match status" value="1"/>
</dbReference>
<dbReference type="Gene3D" id="1.10.357.90">
    <property type="match status" value="1"/>
</dbReference>
<dbReference type="Gene3D" id="3.30.70.2630">
    <property type="match status" value="1"/>
</dbReference>
<dbReference type="InterPro" id="IPR043502">
    <property type="entry name" value="DNA/RNA_pol_sf"/>
</dbReference>
<dbReference type="InterPro" id="IPR000477">
    <property type="entry name" value="RT_dom"/>
</dbReference>
<dbReference type="InterPro" id="IPR021891">
    <property type="entry name" value="Telomerase_RBD"/>
</dbReference>
<dbReference type="InterPro" id="IPR003545">
    <property type="entry name" value="Telomerase_RT"/>
</dbReference>
<dbReference type="InterPro" id="IPR049139">
    <property type="entry name" value="TERT_C"/>
</dbReference>
<dbReference type="PANTHER" id="PTHR12066">
    <property type="entry name" value="TELOMERASE REVERSE TRANSCRIPTASE"/>
    <property type="match status" value="1"/>
</dbReference>
<dbReference type="PANTHER" id="PTHR12066:SF0">
    <property type="entry name" value="TELOMERASE REVERSE TRANSCRIPTASE"/>
    <property type="match status" value="1"/>
</dbReference>
<dbReference type="Pfam" id="PF00078">
    <property type="entry name" value="RVT_1"/>
    <property type="match status" value="1"/>
</dbReference>
<dbReference type="Pfam" id="PF12009">
    <property type="entry name" value="Telomerase_RBD"/>
    <property type="match status" value="1"/>
</dbReference>
<dbReference type="Pfam" id="PF21399">
    <property type="entry name" value="TERT_C"/>
    <property type="match status" value="1"/>
</dbReference>
<dbReference type="PRINTS" id="PR01365">
    <property type="entry name" value="TELOMERASERT"/>
</dbReference>
<dbReference type="SMART" id="SM00975">
    <property type="entry name" value="Telomerase_RBD"/>
    <property type="match status" value="1"/>
</dbReference>
<dbReference type="SUPFAM" id="SSF56672">
    <property type="entry name" value="DNA/RNA polymerases"/>
    <property type="match status" value="1"/>
</dbReference>
<dbReference type="PROSITE" id="PS50878">
    <property type="entry name" value="RT_POL"/>
    <property type="match status" value="1"/>
</dbReference>
<evidence type="ECO:0000250" key="1"/>
<evidence type="ECO:0000250" key="2">
    <source>
        <dbReference type="UniProtKB" id="O14746"/>
    </source>
</evidence>
<evidence type="ECO:0000250" key="3">
    <source>
        <dbReference type="UniProtKB" id="O70372"/>
    </source>
</evidence>
<evidence type="ECO:0000250" key="4">
    <source>
        <dbReference type="UniProtKB" id="Q4KTA7"/>
    </source>
</evidence>
<evidence type="ECO:0000255" key="5"/>
<evidence type="ECO:0000255" key="6">
    <source>
        <dbReference type="PROSITE-ProRule" id="PRU00405"/>
    </source>
</evidence>
<evidence type="ECO:0000256" key="7">
    <source>
        <dbReference type="SAM" id="MobiDB-lite"/>
    </source>
</evidence>
<evidence type="ECO:0000269" key="8">
    <source>
    </source>
</evidence>
<evidence type="ECO:0000269" key="9">
    <source>
    </source>
</evidence>
<evidence type="ECO:0000269" key="10">
    <source>
    </source>
</evidence>
<evidence type="ECO:0000269" key="11">
    <source>
    </source>
</evidence>
<evidence type="ECO:0000303" key="12">
    <source>
    </source>
</evidence>
<evidence type="ECO:0000305" key="13"/>
<evidence type="ECO:0000312" key="14">
    <source>
        <dbReference type="EMBL" id="AAT09124.1"/>
    </source>
</evidence>
<evidence type="ECO:0000312" key="15">
    <source>
        <dbReference type="EMBL" id="AAY40300.1"/>
    </source>
</evidence>
<evidence type="ECO:0000312" key="16">
    <source>
        <dbReference type="EMBL" id="CAD29524.1"/>
    </source>
</evidence>
<evidence type="ECO:0000312" key="17">
    <source>
        <dbReference type="EMBL" id="DAA01427.1"/>
    </source>
</evidence>
<evidence type="ECO:0000312" key="18">
    <source>
        <dbReference type="RGD" id="70494"/>
    </source>
</evidence>
<comment type="function">
    <text evidence="1">Telomerase is a ribonucleoprotein enzyme essential for the replication of chromosome termini in most eukaryotes. Active in progenitor and cancer cells. Inactive, or very low activity, in normal somatic cells. Catalytic component of the teleromerase holoenzyme complex whose main activity is the elongation of telomeres by acting as a reverse transcriptase that adds simple sequence repeats to chromosome ends by copying a template sequence within the RNA component of the enzyme. Catalyzes the RNA-dependent extension of 3'-chromosomal termini with the 6-nucleotide telomeric repeat unit, 5'-TTAGGG-3'. The catalytic cycle involves primer binding, primer extension and release of product once the template boundary has been reached or nascent product translocation followed by further extension. More active on substrates containing 2 or 3 telomeric repeats. Telomerase activity is regulated by a number of factors including telomerase complex-associated proteins, chaperones and polypeptide modifiers. Modulates Wnt signaling. Plays important roles in aging and antiapoptosis (By similarity).</text>
</comment>
<comment type="catalytic activity">
    <reaction evidence="6">
        <text>DNA(n) + a 2'-deoxyribonucleoside 5'-triphosphate = DNA(n+1) + diphosphate</text>
        <dbReference type="Rhea" id="RHEA:22508"/>
        <dbReference type="Rhea" id="RHEA-COMP:17339"/>
        <dbReference type="Rhea" id="RHEA-COMP:17340"/>
        <dbReference type="ChEBI" id="CHEBI:33019"/>
        <dbReference type="ChEBI" id="CHEBI:61560"/>
        <dbReference type="ChEBI" id="CHEBI:173112"/>
        <dbReference type="EC" id="2.7.7.49"/>
    </reaction>
</comment>
<comment type="subunit">
    <text evidence="2 3">Catalytic component of the telomerase holoenzyme complex composed of one molecule of TERT, one molecule of WRAP53/TCAB1, two molecules of H/ACA ribonucleoprotein complex subunits DKC1, NOP10, NHP2 and GAR1, and a telomerase RNA template component (TERC). The telomerase holoenzyme complex is associated with TEP1, SMG6/EST1A and POT1. The molecular chaperone HSP90/P23 complex is required for correct assembly and stabilization of the active telomerase. Interacts directly with HSP90A and PTGES3. Interacts with HSPA1A; the interaction occurs in the absence of TERC and dissociates once the complex has formed. Interacts with RAN; the interaction promotes nuclear export of TERT. Interacts with XPO1. Interacts with PTPN11; the interaction retains TERT in the nucleus. Interacts with NCL (via RRM1 and C-terminal RRM4/Arg/Gly-rich domains); the interaction is important for nucleolar localization of TERT (By similarity). Interacts with SMARCA4 (via the bromodomain); the interaction regulates Wnt-mediated signaling (By similarity). Interacts with MCRS1 (isoform MCRS2); the interaction inhibits in vitro telomerase activity (By similarity). Interacts with PIF1; the interaction has no effect on the elongation activity of TERT (By similarity). Interacts with PML; the interaction recruits TERT to PML bodies and inhibits telomerase activity (By similarity). Interacts with GNL3L (By similarity). Interacts with isoform 1 and isoform 2 of NVL (By similarity). Interacts with DHX36 (By similarity). Interacts with ATF7 (By similarity).</text>
</comment>
<comment type="subcellular location">
    <subcellularLocation>
        <location evidence="2">Nucleus</location>
        <location evidence="2">Nucleolus</location>
    </subcellularLocation>
    <subcellularLocation>
        <location evidence="1">Nucleus</location>
        <location evidence="1">Nucleoplasm</location>
    </subcellularLocation>
    <subcellularLocation>
        <location evidence="13">Nucleus</location>
    </subcellularLocation>
    <subcellularLocation>
        <location>Chromosome</location>
        <location>Telomere</location>
    </subcellularLocation>
    <subcellularLocation>
        <location evidence="1">Cytoplasm</location>
    </subcellularLocation>
    <subcellularLocation>
        <location evidence="1">Nucleus</location>
        <location evidence="1">PML body</location>
    </subcellularLocation>
    <text evidence="1">Shuttling between nuclear and cytoplasm depends on cell cycle, phosphorylation states, transformation and DNA damage. Diffuse localization in the nucleoplasm. Enriched in nucleoli of certain cell types. Translocated to the cytoplasm via nuclear pores in a CRM1/RAN-dependent manner involving oxidative stress-mediated phosphorylation at Tyr-697. Dephosphorylation at this site by SHP2 retains TERT in the nucleus. Translocated to the nucleus by phosphorylation by AKT (By similarity).</text>
</comment>
<comment type="alternative products">
    <event type="alternative splicing"/>
    <isoform>
        <id>Q673L6-1</id>
        <name evidence="11">1</name>
        <sequence type="displayed"/>
    </isoform>
    <isoform>
        <id>Q673L6-2</id>
        <name evidence="11">2</name>
        <name evidence="11">a</name>
        <sequence type="described" ref="VSP_052083"/>
    </isoform>
    <isoform>
        <id>Q673L6-3</id>
        <name evidence="11">3</name>
        <name evidence="11">b</name>
        <name evidence="11">c</name>
        <sequence type="described" ref="VSP_052081 VSP_052082"/>
    </isoform>
</comment>
<comment type="tissue specificity">
    <text evidence="8 11">Isoform 1 and isoform 2 expressed in thymus, liver, spleen, lung, kidney and testis. High level of inactive isoform 3 in adult hippocampus, low level in heart, cortex and cerebellum.</text>
</comment>
<comment type="developmental stage">
    <text evidence="11">High activity in cortex at embryonic stage 16 and postnatal day 2. Low activity in cortex from postnatal day 5.</text>
</comment>
<comment type="induction">
    <text evidence="10">Down-regulated by TGFbeta in fibroblasts. This inhibition is mediated by SMAD3.</text>
</comment>
<comment type="domain">
    <text evidence="1">The primer grip sequence in the RT domain is required for telomerase activity and for stable association with short telomeric primers.</text>
</comment>
<comment type="domain">
    <text evidence="1">The RNA-interacting domain 1 (RD1)/N-terminal extension (NTE) is required for interaction with the pseudoknot-template domain of each of TERC dimers. It contains anchor sites that bind primer nucleotides upstream of the RNA-DNA hybrid and is thus an essential determinant of repeat addition processivity (By similarity).</text>
</comment>
<comment type="domain">
    <text evidence="1">The RNA-interacting domain 2 (RD2) is essential for both interaction with the CR4-CR5 domain of TERC and for DNA synthesis.</text>
</comment>
<comment type="PTM">
    <text evidence="1">Phosphorylation at Tyr-697 under oxidative stress leads to translocation of TERT to the cytoplasm and reduces its antiapoptotic activity. Dephosphorylated by SHP2/PTPN11 leading to nuclear retention. Phosphorylation at the G2/M phase at Ser-447 by DYRK2 promotes ubiquitination by the EDVP complex and degradation (By similarity).</text>
</comment>
<comment type="PTM">
    <text evidence="1">Ubiquitinated by the EDVP complex, a E3 ligase complex following phosphorylation at Ser-447 by DYRK2. Ubiquitinated leads to proteasomal degradation (By similarity).</text>
</comment>
<comment type="miscellaneous">
    <molecule>Isoform 3</molecule>
    <text evidence="13">Inactive form.</text>
</comment>
<comment type="similarity">
    <text evidence="5">Belongs to the reverse transcriptase family. Telomerase subfamily.</text>
</comment>